<sequence length="40" mass="4452">ATYNIKLITPEGTKEITCSDSEYILDAAEEKGLDLPYSCR</sequence>
<name>FER2_PEA</name>
<organism>
    <name type="scientific">Pisum sativum</name>
    <name type="common">Garden pea</name>
    <name type="synonym">Lathyrus oleraceus</name>
    <dbReference type="NCBI Taxonomy" id="3888"/>
    <lineage>
        <taxon>Eukaryota</taxon>
        <taxon>Viridiplantae</taxon>
        <taxon>Streptophyta</taxon>
        <taxon>Embryophyta</taxon>
        <taxon>Tracheophyta</taxon>
        <taxon>Spermatophyta</taxon>
        <taxon>Magnoliopsida</taxon>
        <taxon>eudicotyledons</taxon>
        <taxon>Gunneridae</taxon>
        <taxon>Pentapetalae</taxon>
        <taxon>rosids</taxon>
        <taxon>fabids</taxon>
        <taxon>Fabales</taxon>
        <taxon>Fabaceae</taxon>
        <taxon>Papilionoideae</taxon>
        <taxon>50 kb inversion clade</taxon>
        <taxon>NPAAA clade</taxon>
        <taxon>Hologalegina</taxon>
        <taxon>IRL clade</taxon>
        <taxon>Fabeae</taxon>
        <taxon>Pisum</taxon>
    </lineage>
</organism>
<dbReference type="PIR" id="S09338">
    <property type="entry name" value="S09338"/>
</dbReference>
<dbReference type="SMR" id="Q7M258"/>
<dbReference type="GO" id="GO:0009570">
    <property type="term" value="C:chloroplast stroma"/>
    <property type="evidence" value="ECO:0007669"/>
    <property type="project" value="TreeGrafter"/>
</dbReference>
<dbReference type="GO" id="GO:0051537">
    <property type="term" value="F:2 iron, 2 sulfur cluster binding"/>
    <property type="evidence" value="ECO:0007669"/>
    <property type="project" value="UniProtKB-KW"/>
</dbReference>
<dbReference type="GO" id="GO:0046872">
    <property type="term" value="F:metal ion binding"/>
    <property type="evidence" value="ECO:0007669"/>
    <property type="project" value="UniProtKB-KW"/>
</dbReference>
<dbReference type="CDD" id="cd00207">
    <property type="entry name" value="fer2"/>
    <property type="match status" value="1"/>
</dbReference>
<dbReference type="Gene3D" id="3.10.20.30">
    <property type="match status" value="1"/>
</dbReference>
<dbReference type="InterPro" id="IPR036010">
    <property type="entry name" value="2Fe-2S_ferredoxin-like_sf"/>
</dbReference>
<dbReference type="InterPro" id="IPR001041">
    <property type="entry name" value="2Fe-2S_ferredoxin-type"/>
</dbReference>
<dbReference type="InterPro" id="IPR012675">
    <property type="entry name" value="Beta-grasp_dom_sf"/>
</dbReference>
<dbReference type="PANTHER" id="PTHR43112">
    <property type="entry name" value="FERREDOXIN"/>
    <property type="match status" value="1"/>
</dbReference>
<dbReference type="PANTHER" id="PTHR43112:SF3">
    <property type="entry name" value="FERREDOXIN-2, CHLOROPLASTIC"/>
    <property type="match status" value="1"/>
</dbReference>
<dbReference type="Pfam" id="PF00111">
    <property type="entry name" value="Fer2"/>
    <property type="match status" value="1"/>
</dbReference>
<dbReference type="SUPFAM" id="SSF54292">
    <property type="entry name" value="2Fe-2S ferredoxin-like"/>
    <property type="match status" value="1"/>
</dbReference>
<protein>
    <recommendedName>
        <fullName>Ferredoxin-2</fullName>
    </recommendedName>
    <alternativeName>
        <fullName>Ferredoxin II</fullName>
    </alternativeName>
</protein>
<accession>Q7M258</accession>
<accession>P82334</accession>
<feature type="chain" id="PRO_0000234462" description="Ferredoxin-2" evidence="4">
    <location>
        <begin position="1"/>
        <end position="40" status="greater than"/>
    </location>
</feature>
<feature type="domain" description="2Fe-2S ferredoxin-type" evidence="2">
    <location>
        <begin position="3"/>
        <end position="40" status="greater than"/>
    </location>
</feature>
<feature type="binding site" evidence="1">
    <location>
        <position position="39"/>
    </location>
    <ligand>
        <name>[2Fe-2S] cluster</name>
        <dbReference type="ChEBI" id="CHEBI:190135"/>
    </ligand>
</feature>
<feature type="sequence conflict" description="In Ref. 2; AA sequence." evidence="5" ref="2">
    <original>G</original>
    <variation>L</variation>
    <location>
        <position position="12"/>
    </location>
</feature>
<feature type="non-terminal residue" evidence="6">
    <location>
        <position position="40"/>
    </location>
</feature>
<keyword id="KW-0001">2Fe-2S</keyword>
<keyword id="KW-0150">Chloroplast</keyword>
<keyword id="KW-0903">Direct protein sequencing</keyword>
<keyword id="KW-0249">Electron transport</keyword>
<keyword id="KW-0408">Iron</keyword>
<keyword id="KW-0411">Iron-sulfur</keyword>
<keyword id="KW-0479">Metal-binding</keyword>
<keyword id="KW-0934">Plastid</keyword>
<keyword id="KW-0813">Transport</keyword>
<proteinExistence type="evidence at protein level"/>
<comment type="function">
    <text evidence="4">Ferredoxins are iron-sulfur proteins that transfer electrons in a wide variety of metabolic reactions.</text>
</comment>
<comment type="cofactor">
    <cofactor evidence="5">
        <name>[2Fe-2S] cluster</name>
        <dbReference type="ChEBI" id="CHEBI:190135"/>
    </cofactor>
    <text evidence="5">Binds 1 [2Fe-2S] cluster.</text>
</comment>
<comment type="subcellular location">
    <subcellularLocation>
        <location evidence="3">Plastid</location>
        <location evidence="3">Chloroplast</location>
    </subcellularLocation>
</comment>
<comment type="similarity">
    <text evidence="2">Belongs to the 2Fe2S plant-type ferredoxin family.</text>
</comment>
<evidence type="ECO:0000250" key="1">
    <source>
        <dbReference type="UniProtKB" id="P27320"/>
    </source>
</evidence>
<evidence type="ECO:0000255" key="2"/>
<evidence type="ECO:0000269" key="3">
    <source>
    </source>
</evidence>
<evidence type="ECO:0000269" key="4">
    <source ref="1"/>
</evidence>
<evidence type="ECO:0000305" key="5"/>
<evidence type="ECO:0000312" key="6">
    <source>
        <dbReference type="PIR" id="S09338"/>
    </source>
</evidence>
<reference evidence="5 6" key="1">
    <citation type="journal article" date="1980" name="J. Exp. Bot.">
        <title>Comparative studies on the properties of two ferredoxins from Pisum sativum L.</title>
        <authorList>
            <person name="Dutton J.E."/>
            <person name="Rogers L.J."/>
            <person name="Haslett B.G."/>
            <person name="Takruri I.A.H."/>
            <person name="Gleaves J.T."/>
            <person name="Boulter D."/>
        </authorList>
    </citation>
    <scope>PROTEIN SEQUENCE</scope>
    <scope>FUNCTION</scope>
    <source>
        <tissue evidence="4">Seedling</tissue>
    </source>
</reference>
<reference evidence="5" key="2">
    <citation type="journal article" date="2000" name="Plant Cell">
        <title>Proteomics of the chloroplast: systematic identification and targeting analysis of lumenal and peripheral thylakoid proteins.</title>
        <authorList>
            <person name="Peltier J.-B."/>
            <person name="Friso G."/>
            <person name="Kalume D.E."/>
            <person name="Roepstorff P."/>
            <person name="Nilsson F."/>
            <person name="Adamska I."/>
            <person name="van Wijk K.J."/>
        </authorList>
    </citation>
    <scope>PROTEIN SEQUENCE OF 1-12</scope>
    <scope>SUBCELLULAR LOCATION</scope>
    <source>
        <strain evidence="3">cv. De Grace</strain>
        <tissue evidence="3">Leaf</tissue>
    </source>
</reference>